<feature type="chain" id="PRO_0000106117" description="Non-structural protein 3b">
    <location>
        <begin position="1"/>
        <end position="63"/>
    </location>
</feature>
<organism>
    <name type="scientific">Avian infectious bronchitis virus (strain UK/183/66)</name>
    <name type="common">IBV</name>
    <dbReference type="NCBI Taxonomy" id="31629"/>
    <lineage>
        <taxon>Viruses</taxon>
        <taxon>Riboviria</taxon>
        <taxon>Orthornavirae</taxon>
        <taxon>Pisuviricota</taxon>
        <taxon>Pisoniviricetes</taxon>
        <taxon>Nidovirales</taxon>
        <taxon>Cornidovirineae</taxon>
        <taxon>Coronaviridae</taxon>
        <taxon>Orthocoronavirinae</taxon>
        <taxon>Gammacoronavirus</taxon>
        <taxon>Igacovirus</taxon>
        <taxon>Avian coronavirus</taxon>
    </lineage>
</organism>
<proteinExistence type="predicted"/>
<organismHost>
    <name type="scientific">Gallus gallus</name>
    <name type="common">Chicken</name>
    <dbReference type="NCBI Taxonomy" id="9031"/>
</organismHost>
<sequence>MLNFEAIIETGDQVIQQISFDLQHISSVLNTELFDPFEVCCYRGGNYWELESAEEFSGDDESS</sequence>
<reference key="1">
    <citation type="journal article" date="1991" name="Virology">
        <title>A polycistronic mRNA specified by the coronavirus infectious bronchitis virus.</title>
        <authorList>
            <person name="Liu D.X."/>
            <person name="Cavanagh D."/>
            <person name="Green P."/>
            <person name="Inglis S.C."/>
        </authorList>
    </citation>
    <scope>NUCLEOTIDE SEQUENCE [GENOMIC RNA]</scope>
</reference>
<protein>
    <recommendedName>
        <fullName>Non-structural protein 3b</fullName>
        <shortName>ns3b</shortName>
    </recommendedName>
    <alternativeName>
        <fullName>Accessory protein 3b</fullName>
    </alternativeName>
</protein>
<gene>
    <name type="ORF">3b</name>
</gene>
<dbReference type="EMBL" id="X59820">
    <property type="protein sequence ID" value="CAA42491.1"/>
    <property type="molecule type" value="Genomic_RNA"/>
</dbReference>
<dbReference type="PIR" id="E36816">
    <property type="entry name" value="WMIH25"/>
</dbReference>
<dbReference type="SMR" id="P30244"/>
<dbReference type="InterPro" id="IPR005295">
    <property type="entry name" value="IBV_3B"/>
</dbReference>
<dbReference type="Pfam" id="PF03622">
    <property type="entry name" value="IBV_3B"/>
    <property type="match status" value="1"/>
</dbReference>
<name>NS3B_IBVU5</name>
<accession>P30244</accession>